<reference key="1">
    <citation type="submission" date="2004-08" db="EMBL/GenBank/DDBJ databases">
        <authorList>
            <consortium name="NIH - Xenopus Gene Collection (XGC) project"/>
        </authorList>
    </citation>
    <scope>NUCLEOTIDE SEQUENCE [LARGE SCALE MRNA]</scope>
    <source>
        <tissue>Embryo</tissue>
    </source>
</reference>
<organism>
    <name type="scientific">Xenopus tropicalis</name>
    <name type="common">Western clawed frog</name>
    <name type="synonym">Silurana tropicalis</name>
    <dbReference type="NCBI Taxonomy" id="8364"/>
    <lineage>
        <taxon>Eukaryota</taxon>
        <taxon>Metazoa</taxon>
        <taxon>Chordata</taxon>
        <taxon>Craniata</taxon>
        <taxon>Vertebrata</taxon>
        <taxon>Euteleostomi</taxon>
        <taxon>Amphibia</taxon>
        <taxon>Batrachia</taxon>
        <taxon>Anura</taxon>
        <taxon>Pipoidea</taxon>
        <taxon>Pipidae</taxon>
        <taxon>Xenopodinae</taxon>
        <taxon>Xenopus</taxon>
        <taxon>Silurana</taxon>
    </lineage>
</organism>
<feature type="chain" id="PRO_0000278654" description="Ubiquitin-conjugating enzyme E2 variant 3">
    <location>
        <begin position="1"/>
        <end position="476"/>
    </location>
</feature>
<feature type="domain" description="UEV" evidence="2">
    <location>
        <begin position="2"/>
        <end position="145"/>
    </location>
</feature>
<feature type="binding site" evidence="1">
    <location>
        <begin position="185"/>
        <end position="213"/>
    </location>
    <ligand>
        <name>NAD(+)</name>
        <dbReference type="ChEBI" id="CHEBI:57540"/>
    </ligand>
</feature>
<keyword id="KW-0520">NAD</keyword>
<keyword id="KW-1185">Reference proteome</keyword>
<keyword id="KW-0833">Ubl conjugation pathway</keyword>
<accession>Q66KB7</accession>
<comment type="function">
    <text evidence="1">Possible negative regulator of polyubiquitination.</text>
</comment>
<comment type="subunit">
    <text evidence="1">Homodimer.</text>
</comment>
<comment type="similarity">
    <text evidence="3">In the N-terminal section; belongs to the ubiquitin-conjugating enzyme family. UEV subfamily.</text>
</comment>
<comment type="similarity">
    <text evidence="3">In the C-terminal section; belongs to the LDH/MDH superfamily.</text>
</comment>
<evidence type="ECO:0000250" key="1"/>
<evidence type="ECO:0000255" key="2">
    <source>
        <dbReference type="PROSITE-ProRule" id="PRU00652"/>
    </source>
</evidence>
<evidence type="ECO:0000305" key="3"/>
<sequence>MEFSAETLRQQLGKYKFRDLTIEELKDLNRTFPSFIFSMETYTFRDGSQKDLLNLTGTVPMKHQGTTYNIPICLWILDSHPFAPPLCFLKPSGNMGIRVGRHIDAQGRIYLPYLQNWSHPKSTVTGLIREMAVKFEEELPLYSLSAEDGARQRELLSYIAQVTDGVSSMDVKAPSRAKVTVIGGGDMALACLLAVSAKGTAGKLLLLDPTDGEAAGGAAADLEIFSLPNVQVTKDFSAIAGSAIVIVTVNSWSNSQSYVGVLQSNVELLRGILPAVAHHCPKCLLLVASQPVEIMTYATWKLSGFPHNRVLGIGCNLDSGRFRHVIEKLADSEEGAQGAWIIGEQSDNKVAVWGAPDSSANRQTPCKLYPKIFQEQLTSRALEILKGKGQRSWSVGLSVADITDTLVQNKGKVHSVSALCKGQFGVQEEVFLSIPCVLGSAGVTGAVQTLQDEAQIWETLQRSAAAIESVQQQLRL</sequence>
<dbReference type="EMBL" id="BC080471">
    <property type="protein sequence ID" value="AAH80471.1"/>
    <property type="molecule type" value="mRNA"/>
</dbReference>
<dbReference type="RefSeq" id="NP_001007958.1">
    <property type="nucleotide sequence ID" value="NM_001007957.1"/>
</dbReference>
<dbReference type="SMR" id="Q66KB7"/>
<dbReference type="FunCoup" id="Q66KB7">
    <property type="interactions" value="414"/>
</dbReference>
<dbReference type="STRING" id="8364.ENSXETP00000028062"/>
<dbReference type="PaxDb" id="8364-ENSXETP00000018628"/>
<dbReference type="GeneID" id="493332"/>
<dbReference type="KEGG" id="xtr:493332"/>
<dbReference type="AGR" id="Xenbase:XB-GENE-5786365"/>
<dbReference type="CTD" id="55293"/>
<dbReference type="Xenbase" id="XB-GENE-5786365">
    <property type="gene designation" value="uevld"/>
</dbReference>
<dbReference type="eggNOG" id="KOG1495">
    <property type="taxonomic scope" value="Eukaryota"/>
</dbReference>
<dbReference type="eggNOG" id="KOG2391">
    <property type="taxonomic scope" value="Eukaryota"/>
</dbReference>
<dbReference type="HOGENOM" id="CLU_039842_0_1_1"/>
<dbReference type="InParanoid" id="Q66KB7"/>
<dbReference type="OMA" id="CIMGANG"/>
<dbReference type="OrthoDB" id="5405561at2759"/>
<dbReference type="PhylomeDB" id="Q66KB7"/>
<dbReference type="TreeFam" id="TF314963"/>
<dbReference type="Proteomes" id="UP000008143">
    <property type="component" value="Chromosome 4"/>
</dbReference>
<dbReference type="GO" id="GO:0016616">
    <property type="term" value="F:oxidoreductase activity, acting on the CH-OH group of donors, NAD or NADP as acceptor"/>
    <property type="evidence" value="ECO:0007669"/>
    <property type="project" value="InterPro"/>
</dbReference>
<dbReference type="GO" id="GO:0019752">
    <property type="term" value="P:carboxylic acid metabolic process"/>
    <property type="evidence" value="ECO:0007669"/>
    <property type="project" value="InterPro"/>
</dbReference>
<dbReference type="GO" id="GO:0036211">
    <property type="term" value="P:protein modification process"/>
    <property type="evidence" value="ECO:0007669"/>
    <property type="project" value="InterPro"/>
</dbReference>
<dbReference type="GO" id="GO:0015031">
    <property type="term" value="P:protein transport"/>
    <property type="evidence" value="ECO:0007669"/>
    <property type="project" value="InterPro"/>
</dbReference>
<dbReference type="CDD" id="cd11685">
    <property type="entry name" value="UEV_TSG101-like"/>
    <property type="match status" value="1"/>
</dbReference>
<dbReference type="Gene3D" id="3.90.110.10">
    <property type="entry name" value="Lactate dehydrogenase/glycoside hydrolase, family 4, C-terminal"/>
    <property type="match status" value="1"/>
</dbReference>
<dbReference type="Gene3D" id="3.40.50.720">
    <property type="entry name" value="NAD(P)-binding Rossmann-like Domain"/>
    <property type="match status" value="1"/>
</dbReference>
<dbReference type="Gene3D" id="3.10.110.10">
    <property type="entry name" value="Ubiquitin Conjugating Enzyme"/>
    <property type="match status" value="1"/>
</dbReference>
<dbReference type="InterPro" id="IPR001557">
    <property type="entry name" value="L-lactate/malate_DH"/>
</dbReference>
<dbReference type="InterPro" id="IPR022383">
    <property type="entry name" value="Lactate/malate_DH_C"/>
</dbReference>
<dbReference type="InterPro" id="IPR001236">
    <property type="entry name" value="Lactate/malate_DH_N"/>
</dbReference>
<dbReference type="InterPro" id="IPR015955">
    <property type="entry name" value="Lactate_DH/Glyco_Ohase_4_C"/>
</dbReference>
<dbReference type="InterPro" id="IPR036291">
    <property type="entry name" value="NAD(P)-bd_dom_sf"/>
</dbReference>
<dbReference type="InterPro" id="IPR016135">
    <property type="entry name" value="UBQ-conjugating_enzyme/RWD"/>
</dbReference>
<dbReference type="InterPro" id="IPR008883">
    <property type="entry name" value="UEV_N"/>
</dbReference>
<dbReference type="PANTHER" id="PTHR43128">
    <property type="entry name" value="L-2-HYDROXYCARBOXYLATE DEHYDROGENASE (NAD(P)(+))"/>
    <property type="match status" value="1"/>
</dbReference>
<dbReference type="PANTHER" id="PTHR43128:SF33">
    <property type="entry name" value="UBIQUITIN-CONJUGATING ENZYME E2 VARIANT 3"/>
    <property type="match status" value="1"/>
</dbReference>
<dbReference type="Pfam" id="PF02866">
    <property type="entry name" value="Ldh_1_C"/>
    <property type="match status" value="1"/>
</dbReference>
<dbReference type="Pfam" id="PF00056">
    <property type="entry name" value="Ldh_1_N"/>
    <property type="match status" value="1"/>
</dbReference>
<dbReference type="Pfam" id="PF05743">
    <property type="entry name" value="UEV"/>
    <property type="match status" value="1"/>
</dbReference>
<dbReference type="PRINTS" id="PR00086">
    <property type="entry name" value="LLDHDRGNASE"/>
</dbReference>
<dbReference type="SUPFAM" id="SSF56327">
    <property type="entry name" value="LDH C-terminal domain-like"/>
    <property type="match status" value="1"/>
</dbReference>
<dbReference type="SUPFAM" id="SSF51735">
    <property type="entry name" value="NAD(P)-binding Rossmann-fold domains"/>
    <property type="match status" value="1"/>
</dbReference>
<dbReference type="SUPFAM" id="SSF54495">
    <property type="entry name" value="UBC-like"/>
    <property type="match status" value="1"/>
</dbReference>
<dbReference type="PROSITE" id="PS51322">
    <property type="entry name" value="UEV"/>
    <property type="match status" value="1"/>
</dbReference>
<name>UEVLD_XENTR</name>
<proteinExistence type="evidence at transcript level"/>
<protein>
    <recommendedName>
        <fullName>Ubiquitin-conjugating enzyme E2 variant 3</fullName>
        <shortName>UEV-3</shortName>
    </recommendedName>
    <alternativeName>
        <fullName>EV and lactate/malate dehydrogenase domain-containing protein</fullName>
    </alternativeName>
</protein>
<gene>
    <name type="primary">uevld</name>
    <name type="synonym">uev3</name>
</gene>